<reference key="1">
    <citation type="submission" date="2007-04" db="EMBL/GenBank/DDBJ databases">
        <title>Complete sequence of Roseiflexus sp. RS-1.</title>
        <authorList>
            <consortium name="US DOE Joint Genome Institute"/>
            <person name="Copeland A."/>
            <person name="Lucas S."/>
            <person name="Lapidus A."/>
            <person name="Barry K."/>
            <person name="Detter J.C."/>
            <person name="Glavina del Rio T."/>
            <person name="Hammon N."/>
            <person name="Israni S."/>
            <person name="Dalin E."/>
            <person name="Tice H."/>
            <person name="Pitluck S."/>
            <person name="Chertkov O."/>
            <person name="Brettin T."/>
            <person name="Bruce D."/>
            <person name="Han C."/>
            <person name="Schmutz J."/>
            <person name="Larimer F."/>
            <person name="Land M."/>
            <person name="Hauser L."/>
            <person name="Kyrpides N."/>
            <person name="Mikhailova N."/>
            <person name="Bryant D.A."/>
            <person name="Richardson P."/>
        </authorList>
    </citation>
    <scope>NUCLEOTIDE SEQUENCE [LARGE SCALE GENOMIC DNA]</scope>
    <source>
        <strain>RS-1</strain>
    </source>
</reference>
<gene>
    <name evidence="1" type="primary">rnpA</name>
    <name type="ordered locus">RoseRS_3966</name>
</gene>
<name>RNPA_ROSS1</name>
<organism>
    <name type="scientific">Roseiflexus sp. (strain RS-1)</name>
    <dbReference type="NCBI Taxonomy" id="357808"/>
    <lineage>
        <taxon>Bacteria</taxon>
        <taxon>Bacillati</taxon>
        <taxon>Chloroflexota</taxon>
        <taxon>Chloroflexia</taxon>
        <taxon>Chloroflexales</taxon>
        <taxon>Roseiflexineae</taxon>
        <taxon>Roseiflexaceae</taxon>
        <taxon>Roseiflexus</taxon>
    </lineage>
</organism>
<proteinExistence type="inferred from homology"/>
<dbReference type="EC" id="3.1.26.5" evidence="1"/>
<dbReference type="EMBL" id="CP000686">
    <property type="protein sequence ID" value="ABQ92316.1"/>
    <property type="molecule type" value="Genomic_DNA"/>
</dbReference>
<dbReference type="SMR" id="A5V0B3"/>
<dbReference type="STRING" id="357808.RoseRS_3966"/>
<dbReference type="KEGG" id="rrs:RoseRS_3966"/>
<dbReference type="eggNOG" id="COG0594">
    <property type="taxonomic scope" value="Bacteria"/>
</dbReference>
<dbReference type="HOGENOM" id="CLU_117179_9_0_0"/>
<dbReference type="OrthoDB" id="166028at2"/>
<dbReference type="Proteomes" id="UP000006554">
    <property type="component" value="Chromosome"/>
</dbReference>
<dbReference type="GO" id="GO:0030677">
    <property type="term" value="C:ribonuclease P complex"/>
    <property type="evidence" value="ECO:0007669"/>
    <property type="project" value="TreeGrafter"/>
</dbReference>
<dbReference type="GO" id="GO:0042781">
    <property type="term" value="F:3'-tRNA processing endoribonuclease activity"/>
    <property type="evidence" value="ECO:0007669"/>
    <property type="project" value="TreeGrafter"/>
</dbReference>
<dbReference type="GO" id="GO:0004526">
    <property type="term" value="F:ribonuclease P activity"/>
    <property type="evidence" value="ECO:0007669"/>
    <property type="project" value="UniProtKB-UniRule"/>
</dbReference>
<dbReference type="GO" id="GO:0000049">
    <property type="term" value="F:tRNA binding"/>
    <property type="evidence" value="ECO:0007669"/>
    <property type="project" value="UniProtKB-UniRule"/>
</dbReference>
<dbReference type="GO" id="GO:0001682">
    <property type="term" value="P:tRNA 5'-leader removal"/>
    <property type="evidence" value="ECO:0007669"/>
    <property type="project" value="UniProtKB-UniRule"/>
</dbReference>
<dbReference type="Gene3D" id="3.30.230.10">
    <property type="match status" value="1"/>
</dbReference>
<dbReference type="HAMAP" id="MF_00227">
    <property type="entry name" value="RNase_P"/>
    <property type="match status" value="1"/>
</dbReference>
<dbReference type="InterPro" id="IPR020568">
    <property type="entry name" value="Ribosomal_Su5_D2-typ_SF"/>
</dbReference>
<dbReference type="InterPro" id="IPR014721">
    <property type="entry name" value="Ribsml_uS5_D2-typ_fold_subgr"/>
</dbReference>
<dbReference type="InterPro" id="IPR000100">
    <property type="entry name" value="RNase_P"/>
</dbReference>
<dbReference type="InterPro" id="IPR020539">
    <property type="entry name" value="RNase_P_CS"/>
</dbReference>
<dbReference type="NCBIfam" id="TIGR00188">
    <property type="entry name" value="rnpA"/>
    <property type="match status" value="1"/>
</dbReference>
<dbReference type="PANTHER" id="PTHR33992">
    <property type="entry name" value="RIBONUCLEASE P PROTEIN COMPONENT"/>
    <property type="match status" value="1"/>
</dbReference>
<dbReference type="PANTHER" id="PTHR33992:SF1">
    <property type="entry name" value="RIBONUCLEASE P PROTEIN COMPONENT"/>
    <property type="match status" value="1"/>
</dbReference>
<dbReference type="Pfam" id="PF00825">
    <property type="entry name" value="Ribonuclease_P"/>
    <property type="match status" value="1"/>
</dbReference>
<dbReference type="SUPFAM" id="SSF54211">
    <property type="entry name" value="Ribosomal protein S5 domain 2-like"/>
    <property type="match status" value="1"/>
</dbReference>
<dbReference type="PROSITE" id="PS00648">
    <property type="entry name" value="RIBONUCLEASE_P"/>
    <property type="match status" value="1"/>
</dbReference>
<sequence>MKRAYRLRTPEQYQRVRRDGRTWDAGMLMLNAAPNRRRLSRCGFVTPKRLGGAVTRNRIRRRVREAVRLLYPQIVPGWDIVFIARSPALAEIAFPQLQALVQQALQRAGVLQASDSGQSDMG</sequence>
<protein>
    <recommendedName>
        <fullName evidence="1">Ribonuclease P protein component</fullName>
        <shortName evidence="1">RNase P protein</shortName>
        <shortName evidence="1">RNaseP protein</shortName>
        <ecNumber evidence="1">3.1.26.5</ecNumber>
    </recommendedName>
    <alternativeName>
        <fullName evidence="1">Protein C5</fullName>
    </alternativeName>
</protein>
<feature type="chain" id="PRO_1000021453" description="Ribonuclease P protein component">
    <location>
        <begin position="1"/>
        <end position="122"/>
    </location>
</feature>
<accession>A5V0B3</accession>
<evidence type="ECO:0000255" key="1">
    <source>
        <dbReference type="HAMAP-Rule" id="MF_00227"/>
    </source>
</evidence>
<keyword id="KW-0255">Endonuclease</keyword>
<keyword id="KW-0378">Hydrolase</keyword>
<keyword id="KW-0540">Nuclease</keyword>
<keyword id="KW-0694">RNA-binding</keyword>
<keyword id="KW-0819">tRNA processing</keyword>
<comment type="function">
    <text evidence="1">RNaseP catalyzes the removal of the 5'-leader sequence from pre-tRNA to produce the mature 5'-terminus. It can also cleave other RNA substrates such as 4.5S RNA. The protein component plays an auxiliary but essential role in vivo by binding to the 5'-leader sequence and broadening the substrate specificity of the ribozyme.</text>
</comment>
<comment type="catalytic activity">
    <reaction evidence="1">
        <text>Endonucleolytic cleavage of RNA, removing 5'-extranucleotides from tRNA precursor.</text>
        <dbReference type="EC" id="3.1.26.5"/>
    </reaction>
</comment>
<comment type="subunit">
    <text evidence="1">Consists of a catalytic RNA component (M1 or rnpB) and a protein subunit.</text>
</comment>
<comment type="similarity">
    <text evidence="1">Belongs to the RnpA family.</text>
</comment>